<protein>
    <recommendedName>
        <fullName>NAD-dependent protein deacetylase SIR2rp1</fullName>
        <ecNumber evidence="2">2.3.1.286</ecNumber>
    </recommendedName>
    <alternativeName>
        <fullName>Regulatory protein SIR2 homolog 1</fullName>
    </alternativeName>
    <alternativeName>
        <fullName>SIR2-related protein 1</fullName>
    </alternativeName>
</protein>
<reference key="1">
    <citation type="journal article" date="1996" name="Gene">
        <title>A Leishmania major protein with extensive homology to silent information regulator 2 of Saccharomyces cerevisiae.</title>
        <authorList>
            <person name="Yahiaoui B."/>
            <person name="Taibi A."/>
            <person name="Ouaissi A."/>
        </authorList>
    </citation>
    <scope>NUCLEOTIDE SEQUENCE [MRNA]</scope>
</reference>
<reference key="2">
    <citation type="journal article" date="2005" name="Science">
        <title>The genome of the kinetoplastid parasite, Leishmania major.</title>
        <authorList>
            <person name="Ivens A.C."/>
            <person name="Peacock C.S."/>
            <person name="Worthey E.A."/>
            <person name="Murphy L."/>
            <person name="Aggarwal G."/>
            <person name="Berriman M."/>
            <person name="Sisk E."/>
            <person name="Rajandream M.A."/>
            <person name="Adlem E."/>
            <person name="Aert R."/>
            <person name="Anupama A."/>
            <person name="Apostolou Z."/>
            <person name="Attipoe P."/>
            <person name="Bason N."/>
            <person name="Bauser C."/>
            <person name="Beck A."/>
            <person name="Beverley S.M."/>
            <person name="Bianchettin G."/>
            <person name="Borzym K."/>
            <person name="Bothe G."/>
            <person name="Bruschi C.V."/>
            <person name="Collins M."/>
            <person name="Cadag E."/>
            <person name="Ciarloni L."/>
            <person name="Clayton C."/>
            <person name="Coulson R.M.R."/>
            <person name="Cronin A."/>
            <person name="Cruz A.K."/>
            <person name="Davies R.M."/>
            <person name="De Gaudenzi J."/>
            <person name="Dobson D.E."/>
            <person name="Duesterhoeft A."/>
            <person name="Fazelina G."/>
            <person name="Fosker N."/>
            <person name="Frasch A.C."/>
            <person name="Fraser A."/>
            <person name="Fuchs M."/>
            <person name="Gabel C."/>
            <person name="Goble A."/>
            <person name="Goffeau A."/>
            <person name="Harris D."/>
            <person name="Hertz-Fowler C."/>
            <person name="Hilbert H."/>
            <person name="Horn D."/>
            <person name="Huang Y."/>
            <person name="Klages S."/>
            <person name="Knights A."/>
            <person name="Kube M."/>
            <person name="Larke N."/>
            <person name="Litvin L."/>
            <person name="Lord A."/>
            <person name="Louie T."/>
            <person name="Marra M."/>
            <person name="Masuy D."/>
            <person name="Matthews K."/>
            <person name="Michaeli S."/>
            <person name="Mottram J.C."/>
            <person name="Mueller-Auer S."/>
            <person name="Munden H."/>
            <person name="Nelson S."/>
            <person name="Norbertczak H."/>
            <person name="Oliver K."/>
            <person name="O'neil S."/>
            <person name="Pentony M."/>
            <person name="Pohl T.M."/>
            <person name="Price C."/>
            <person name="Purnelle B."/>
            <person name="Quail M.A."/>
            <person name="Rabbinowitsch E."/>
            <person name="Reinhardt R."/>
            <person name="Rieger M."/>
            <person name="Rinta J."/>
            <person name="Robben J."/>
            <person name="Robertson L."/>
            <person name="Ruiz J.C."/>
            <person name="Rutter S."/>
            <person name="Saunders D."/>
            <person name="Schaefer M."/>
            <person name="Schein J."/>
            <person name="Schwartz D.C."/>
            <person name="Seeger K."/>
            <person name="Seyler A."/>
            <person name="Sharp S."/>
            <person name="Shin H."/>
            <person name="Sivam D."/>
            <person name="Squares R."/>
            <person name="Squares S."/>
            <person name="Tosato V."/>
            <person name="Vogt C."/>
            <person name="Volckaert G."/>
            <person name="Wambutt R."/>
            <person name="Warren T."/>
            <person name="Wedler H."/>
            <person name="Woodward J."/>
            <person name="Zhou S."/>
            <person name="Zimmermann W."/>
            <person name="Smith D.F."/>
            <person name="Blackwell J.M."/>
            <person name="Stuart K.D."/>
            <person name="Barrell B.G."/>
            <person name="Myler P.J."/>
        </authorList>
    </citation>
    <scope>NUCLEOTIDE SEQUENCE [LARGE SCALE GENOMIC DNA]</scope>
    <source>
        <strain>MHOM/IL/81/Friedlin</strain>
    </source>
</reference>
<feature type="chain" id="PRO_0000110273" description="NAD-dependent protein deacetylase SIR2rp1">
    <location>
        <begin position="1"/>
        <end position="373"/>
    </location>
</feature>
<feature type="domain" description="Deacetylase sirtuin-type" evidence="2">
    <location>
        <begin position="12"/>
        <end position="349"/>
    </location>
</feature>
<feature type="region of interest" description="Disordered" evidence="3">
    <location>
        <begin position="263"/>
        <end position="313"/>
    </location>
</feature>
<feature type="compositionally biased region" description="Low complexity" evidence="3">
    <location>
        <begin position="271"/>
        <end position="282"/>
    </location>
</feature>
<feature type="active site" description="Proton acceptor" evidence="2">
    <location>
        <position position="144"/>
    </location>
</feature>
<feature type="binding site" evidence="1">
    <location>
        <begin position="39"/>
        <end position="59"/>
    </location>
    <ligand>
        <name>NAD(+)</name>
        <dbReference type="ChEBI" id="CHEBI:57540"/>
    </ligand>
</feature>
<feature type="binding site" evidence="1">
    <location>
        <begin position="124"/>
        <end position="127"/>
    </location>
    <ligand>
        <name>NAD(+)</name>
        <dbReference type="ChEBI" id="CHEBI:57540"/>
    </ligand>
</feature>
<feature type="binding site" evidence="2">
    <location>
        <position position="152"/>
    </location>
    <ligand>
        <name>Zn(2+)</name>
        <dbReference type="ChEBI" id="CHEBI:29105"/>
    </ligand>
</feature>
<feature type="binding site" evidence="2">
    <location>
        <position position="155"/>
    </location>
    <ligand>
        <name>Zn(2+)</name>
        <dbReference type="ChEBI" id="CHEBI:29105"/>
    </ligand>
</feature>
<feature type="binding site" evidence="2">
    <location>
        <position position="176"/>
    </location>
    <ligand>
        <name>Zn(2+)</name>
        <dbReference type="ChEBI" id="CHEBI:29105"/>
    </ligand>
</feature>
<feature type="binding site" evidence="2">
    <location>
        <position position="179"/>
    </location>
    <ligand>
        <name>Zn(2+)</name>
        <dbReference type="ChEBI" id="CHEBI:29105"/>
    </ligand>
</feature>
<feature type="binding site" evidence="1">
    <location>
        <begin position="216"/>
        <end position="218"/>
    </location>
    <ligand>
        <name>NAD(+)</name>
        <dbReference type="ChEBI" id="CHEBI:57540"/>
    </ligand>
</feature>
<feature type="binding site" evidence="1">
    <location>
        <begin position="241"/>
        <end position="243"/>
    </location>
    <ligand>
        <name>NAD(+)</name>
        <dbReference type="ChEBI" id="CHEBI:57540"/>
    </ligand>
</feature>
<feature type="binding site" evidence="1">
    <location>
        <position position="335"/>
    </location>
    <ligand>
        <name>NAD(+)</name>
        <dbReference type="ChEBI" id="CHEBI:57540"/>
    </ligand>
</feature>
<name>SIR2_LEIMA</name>
<accession>Q25337</accession>
<accession>Q4Q9H0</accession>
<dbReference type="EC" id="2.3.1.286" evidence="2"/>
<dbReference type="EMBL" id="L40331">
    <property type="protein sequence ID" value="AAB06804.1"/>
    <property type="status" value="ALT_FRAME"/>
    <property type="molecule type" value="mRNA"/>
</dbReference>
<dbReference type="EMBL" id="FR796422">
    <property type="protein sequence ID" value="CAJ04546.1"/>
    <property type="molecule type" value="Genomic_DNA"/>
</dbReference>
<dbReference type="PIR" id="JC4639">
    <property type="entry name" value="JC4639"/>
</dbReference>
<dbReference type="RefSeq" id="XP_001684028.1">
    <property type="nucleotide sequence ID" value="XM_001683976.1"/>
</dbReference>
<dbReference type="SMR" id="Q25337"/>
<dbReference type="FunCoup" id="Q25337">
    <property type="interactions" value="118"/>
</dbReference>
<dbReference type="STRING" id="5664.Q25337"/>
<dbReference type="EnsemblProtists" id="CAJ04546">
    <property type="protein sequence ID" value="CAJ04546"/>
    <property type="gene ID" value="LMJF_26_0210"/>
</dbReference>
<dbReference type="GeneID" id="5652751"/>
<dbReference type="KEGG" id="lma:LMJF_26_0210"/>
<dbReference type="VEuPathDB" id="TriTrypDB:LmjF.26.0210"/>
<dbReference type="VEuPathDB" id="TriTrypDB:LMJFC_260007900"/>
<dbReference type="VEuPathDB" id="TriTrypDB:LMJLV39_260007000"/>
<dbReference type="VEuPathDB" id="TriTrypDB:LMJSD75_260006900"/>
<dbReference type="eggNOG" id="KOG2682">
    <property type="taxonomic scope" value="Eukaryota"/>
</dbReference>
<dbReference type="InParanoid" id="Q25337"/>
<dbReference type="OMA" id="HWRENGF"/>
<dbReference type="Proteomes" id="UP000000542">
    <property type="component" value="Chromosome 26"/>
</dbReference>
<dbReference type="GO" id="GO:0005856">
    <property type="term" value="C:cytoskeleton"/>
    <property type="evidence" value="ECO:0000266"/>
    <property type="project" value="GeneDB"/>
</dbReference>
<dbReference type="GO" id="GO:0005829">
    <property type="term" value="C:cytosol"/>
    <property type="evidence" value="ECO:0000266"/>
    <property type="project" value="GeneDB"/>
</dbReference>
<dbReference type="GO" id="GO:0005634">
    <property type="term" value="C:nucleus"/>
    <property type="evidence" value="ECO:0000266"/>
    <property type="project" value="GeneDB"/>
</dbReference>
<dbReference type="GO" id="GO:0004407">
    <property type="term" value="F:histone deacetylase activity"/>
    <property type="evidence" value="ECO:0000266"/>
    <property type="project" value="GeneDB"/>
</dbReference>
<dbReference type="GO" id="GO:0017136">
    <property type="term" value="F:histone deacetylase activity, NAD-dependent"/>
    <property type="evidence" value="ECO:0000266"/>
    <property type="project" value="GeneDB"/>
</dbReference>
<dbReference type="GO" id="GO:0046872">
    <property type="term" value="F:metal ion binding"/>
    <property type="evidence" value="ECO:0007669"/>
    <property type="project" value="UniProtKB-KW"/>
</dbReference>
<dbReference type="GO" id="GO:0070403">
    <property type="term" value="F:NAD+ binding"/>
    <property type="evidence" value="ECO:0000318"/>
    <property type="project" value="GO_Central"/>
</dbReference>
<dbReference type="GO" id="GO:0003950">
    <property type="term" value="F:NAD+ poly-ADP-ribosyltransferase activity"/>
    <property type="evidence" value="ECO:0000266"/>
    <property type="project" value="GeneDB"/>
</dbReference>
<dbReference type="GO" id="GO:0034979">
    <property type="term" value="F:NAD-dependent protein lysine deacetylase activity"/>
    <property type="evidence" value="ECO:0000266"/>
    <property type="project" value="GeneDB"/>
</dbReference>
<dbReference type="GO" id="GO:0042903">
    <property type="term" value="F:tubulin deacetylase activity"/>
    <property type="evidence" value="ECO:0000266"/>
    <property type="project" value="GeneDB"/>
</dbReference>
<dbReference type="GO" id="GO:0042113">
    <property type="term" value="P:B cell activation"/>
    <property type="evidence" value="ECO:0000266"/>
    <property type="project" value="GeneDB"/>
</dbReference>
<dbReference type="GO" id="GO:0006281">
    <property type="term" value="P:DNA repair"/>
    <property type="evidence" value="ECO:0000266"/>
    <property type="project" value="GeneDB"/>
</dbReference>
<dbReference type="GO" id="GO:0042116">
    <property type="term" value="P:macrophage activation"/>
    <property type="evidence" value="ECO:0000266"/>
    <property type="project" value="GeneDB"/>
</dbReference>
<dbReference type="GO" id="GO:0000183">
    <property type="term" value="P:rDNA heterochromatin formation"/>
    <property type="evidence" value="ECO:0000318"/>
    <property type="project" value="GO_Central"/>
</dbReference>
<dbReference type="GO" id="GO:0052167">
    <property type="term" value="P:symbiont-mediated perturbation of host innate immune response"/>
    <property type="evidence" value="ECO:0000266"/>
    <property type="project" value="GeneDB"/>
</dbReference>
<dbReference type="Gene3D" id="3.30.1600.10">
    <property type="entry name" value="SIR2/SIRT2 'Small Domain"/>
    <property type="match status" value="1"/>
</dbReference>
<dbReference type="Gene3D" id="3.40.50.1220">
    <property type="entry name" value="TPP-binding domain"/>
    <property type="match status" value="1"/>
</dbReference>
<dbReference type="InterPro" id="IPR029035">
    <property type="entry name" value="DHS-like_NAD/FAD-binding_dom"/>
</dbReference>
<dbReference type="InterPro" id="IPR050134">
    <property type="entry name" value="NAD-dep_sirtuin_deacylases"/>
</dbReference>
<dbReference type="InterPro" id="IPR003000">
    <property type="entry name" value="Sirtuin"/>
</dbReference>
<dbReference type="InterPro" id="IPR026591">
    <property type="entry name" value="Sirtuin_cat_small_dom_sf"/>
</dbReference>
<dbReference type="InterPro" id="IPR017328">
    <property type="entry name" value="Sirtuin_class_I"/>
</dbReference>
<dbReference type="InterPro" id="IPR026590">
    <property type="entry name" value="Ssirtuin_cat_dom"/>
</dbReference>
<dbReference type="PANTHER" id="PTHR11085:SF6">
    <property type="entry name" value="NAD-DEPENDENT PROTEIN DEACETYLASE SIRTUIN-2"/>
    <property type="match status" value="1"/>
</dbReference>
<dbReference type="PANTHER" id="PTHR11085">
    <property type="entry name" value="NAD-DEPENDENT PROTEIN DEACYLASE SIRTUIN-5, MITOCHONDRIAL-RELATED"/>
    <property type="match status" value="1"/>
</dbReference>
<dbReference type="Pfam" id="PF02146">
    <property type="entry name" value="SIR2"/>
    <property type="match status" value="1"/>
</dbReference>
<dbReference type="PIRSF" id="PIRSF037938">
    <property type="entry name" value="SIR2_euk"/>
    <property type="match status" value="1"/>
</dbReference>
<dbReference type="SUPFAM" id="SSF52467">
    <property type="entry name" value="DHS-like NAD/FAD-binding domain"/>
    <property type="match status" value="1"/>
</dbReference>
<dbReference type="PROSITE" id="PS50305">
    <property type="entry name" value="SIRTUIN"/>
    <property type="match status" value="1"/>
</dbReference>
<gene>
    <name type="primary">SIR2rp1</name>
    <name type="synonym">SIR2</name>
    <name type="ORF">LMJF_26_0210</name>
</gene>
<evidence type="ECO:0000250" key="1"/>
<evidence type="ECO:0000255" key="2">
    <source>
        <dbReference type="PROSITE-ProRule" id="PRU00236"/>
    </source>
</evidence>
<evidence type="ECO:0000256" key="3">
    <source>
        <dbReference type="SAM" id="MobiDB-lite"/>
    </source>
</evidence>
<evidence type="ECO:0000305" key="4"/>
<sequence length="373" mass="40554">MTGSPRAPHQEHALGEPTVEGLARYIREKDVRRILVLVGAGASVAAGIPDFRSSDTGIYAKLGKYNLDDPTDAFSLTLLREKPEIFYSIARELNLWPGHFQPTAVHHFIRLLQDEGRLLRCCTQNIDGLEKAAGVSPELLVEAHGSFAAAACIECHTPFSIEQNYLEAMSGTVSRCSTCGGIVKPNVVFFGENLPDAFFDALHHDAPIAELVIIIGTSMQVHPFALLPCVVPKSIPRVLMNRERVGGLLFRFPDDPLDTIHDDAVAKEGRSSSSQSRSPSASARREEGGTEDGSSSPNEEVEDASTSSSSDGYGQYGDYYAHPDVCRDVFFRGDCQENVLKLAECLGLREALAKRMRFSGAAPATARKTSNET</sequence>
<comment type="function">
    <text evidence="1">NAD-dependent deacetylase, which probably acts as a regulator of gene expression believed to help form modified chromatin structures on the genes it regulates.</text>
</comment>
<comment type="catalytic activity">
    <reaction evidence="2">
        <text>N(6)-acetyl-L-lysyl-[protein] + NAD(+) + H2O = 2''-O-acetyl-ADP-D-ribose + nicotinamide + L-lysyl-[protein]</text>
        <dbReference type="Rhea" id="RHEA:43636"/>
        <dbReference type="Rhea" id="RHEA-COMP:9752"/>
        <dbReference type="Rhea" id="RHEA-COMP:10731"/>
        <dbReference type="ChEBI" id="CHEBI:15377"/>
        <dbReference type="ChEBI" id="CHEBI:17154"/>
        <dbReference type="ChEBI" id="CHEBI:29969"/>
        <dbReference type="ChEBI" id="CHEBI:57540"/>
        <dbReference type="ChEBI" id="CHEBI:61930"/>
        <dbReference type="ChEBI" id="CHEBI:83767"/>
        <dbReference type="EC" id="2.3.1.286"/>
    </reaction>
</comment>
<comment type="cofactor">
    <cofactor evidence="1">
        <name>Zn(2+)</name>
        <dbReference type="ChEBI" id="CHEBI:29105"/>
    </cofactor>
    <text evidence="1">Binds 1 zinc ion per subunit.</text>
</comment>
<comment type="subcellular location">
    <subcellularLocation>
        <location evidence="4">Nucleus</location>
    </subcellularLocation>
</comment>
<comment type="similarity">
    <text evidence="4">Belongs to the sirtuin family. Class I subfamily.</text>
</comment>
<comment type="sequence caution" evidence="4">
    <conflict type="frameshift">
        <sequence resource="EMBL-CDS" id="AAB06804"/>
    </conflict>
</comment>
<keyword id="KW-0479">Metal-binding</keyword>
<keyword id="KW-0520">NAD</keyword>
<keyword id="KW-0539">Nucleus</keyword>
<keyword id="KW-1185">Reference proteome</keyword>
<keyword id="KW-0678">Repressor</keyword>
<keyword id="KW-0804">Transcription</keyword>
<keyword id="KW-0805">Transcription regulation</keyword>
<keyword id="KW-0808">Transferase</keyword>
<keyword id="KW-0862">Zinc</keyword>
<proteinExistence type="evidence at transcript level"/>
<organism>
    <name type="scientific">Leishmania major</name>
    <dbReference type="NCBI Taxonomy" id="5664"/>
    <lineage>
        <taxon>Eukaryota</taxon>
        <taxon>Discoba</taxon>
        <taxon>Euglenozoa</taxon>
        <taxon>Kinetoplastea</taxon>
        <taxon>Metakinetoplastina</taxon>
        <taxon>Trypanosomatida</taxon>
        <taxon>Trypanosomatidae</taxon>
        <taxon>Leishmaniinae</taxon>
        <taxon>Leishmania</taxon>
    </lineage>
</organism>